<dbReference type="EC" id="2.7.4.25" evidence="1"/>
<dbReference type="EMBL" id="AE016853">
    <property type="protein sequence ID" value="AAO55269.1"/>
    <property type="molecule type" value="Genomic_DNA"/>
</dbReference>
<dbReference type="RefSeq" id="NP_791574.1">
    <property type="nucleotide sequence ID" value="NC_004578.1"/>
</dbReference>
<dbReference type="RefSeq" id="WP_005616463.1">
    <property type="nucleotide sequence ID" value="NC_004578.1"/>
</dbReference>
<dbReference type="SMR" id="Q885T2"/>
<dbReference type="STRING" id="223283.PSPTO_1749"/>
<dbReference type="GeneID" id="61793072"/>
<dbReference type="KEGG" id="pst:PSPTO_1749"/>
<dbReference type="PATRIC" id="fig|223283.9.peg.1778"/>
<dbReference type="eggNOG" id="COG0283">
    <property type="taxonomic scope" value="Bacteria"/>
</dbReference>
<dbReference type="HOGENOM" id="CLU_079959_0_2_6"/>
<dbReference type="OrthoDB" id="9807434at2"/>
<dbReference type="PhylomeDB" id="Q885T2"/>
<dbReference type="Proteomes" id="UP000002515">
    <property type="component" value="Chromosome"/>
</dbReference>
<dbReference type="GO" id="GO:0005829">
    <property type="term" value="C:cytosol"/>
    <property type="evidence" value="ECO:0007669"/>
    <property type="project" value="TreeGrafter"/>
</dbReference>
<dbReference type="GO" id="GO:0005524">
    <property type="term" value="F:ATP binding"/>
    <property type="evidence" value="ECO:0007669"/>
    <property type="project" value="UniProtKB-UniRule"/>
</dbReference>
<dbReference type="GO" id="GO:0036430">
    <property type="term" value="F:CMP kinase activity"/>
    <property type="evidence" value="ECO:0007669"/>
    <property type="project" value="RHEA"/>
</dbReference>
<dbReference type="GO" id="GO:0036431">
    <property type="term" value="F:dCMP kinase activity"/>
    <property type="evidence" value="ECO:0007669"/>
    <property type="project" value="RHEA"/>
</dbReference>
<dbReference type="GO" id="GO:0015949">
    <property type="term" value="P:nucleobase-containing small molecule interconversion"/>
    <property type="evidence" value="ECO:0007669"/>
    <property type="project" value="TreeGrafter"/>
</dbReference>
<dbReference type="GO" id="GO:0006220">
    <property type="term" value="P:pyrimidine nucleotide metabolic process"/>
    <property type="evidence" value="ECO:0007669"/>
    <property type="project" value="UniProtKB-UniRule"/>
</dbReference>
<dbReference type="CDD" id="cd02020">
    <property type="entry name" value="CMPK"/>
    <property type="match status" value="1"/>
</dbReference>
<dbReference type="FunFam" id="3.40.50.300:FF:000262">
    <property type="entry name" value="Cytidylate kinase"/>
    <property type="match status" value="1"/>
</dbReference>
<dbReference type="Gene3D" id="3.40.50.300">
    <property type="entry name" value="P-loop containing nucleotide triphosphate hydrolases"/>
    <property type="match status" value="1"/>
</dbReference>
<dbReference type="HAMAP" id="MF_00238">
    <property type="entry name" value="Cytidyl_kinase_type1"/>
    <property type="match status" value="1"/>
</dbReference>
<dbReference type="InterPro" id="IPR003136">
    <property type="entry name" value="Cytidylate_kin"/>
</dbReference>
<dbReference type="InterPro" id="IPR011994">
    <property type="entry name" value="Cytidylate_kinase_dom"/>
</dbReference>
<dbReference type="InterPro" id="IPR027417">
    <property type="entry name" value="P-loop_NTPase"/>
</dbReference>
<dbReference type="NCBIfam" id="TIGR00017">
    <property type="entry name" value="cmk"/>
    <property type="match status" value="1"/>
</dbReference>
<dbReference type="PANTHER" id="PTHR21299:SF2">
    <property type="entry name" value="CYTIDYLATE KINASE"/>
    <property type="match status" value="1"/>
</dbReference>
<dbReference type="PANTHER" id="PTHR21299">
    <property type="entry name" value="CYTIDYLATE KINASE/PANTOATE-BETA-ALANINE LIGASE"/>
    <property type="match status" value="1"/>
</dbReference>
<dbReference type="Pfam" id="PF02224">
    <property type="entry name" value="Cytidylate_kin"/>
    <property type="match status" value="1"/>
</dbReference>
<dbReference type="SUPFAM" id="SSF52540">
    <property type="entry name" value="P-loop containing nucleoside triphosphate hydrolases"/>
    <property type="match status" value="1"/>
</dbReference>
<keyword id="KW-0067">ATP-binding</keyword>
<keyword id="KW-0963">Cytoplasm</keyword>
<keyword id="KW-0418">Kinase</keyword>
<keyword id="KW-0547">Nucleotide-binding</keyword>
<keyword id="KW-1185">Reference proteome</keyword>
<keyword id="KW-0808">Transferase</keyword>
<organism>
    <name type="scientific">Pseudomonas syringae pv. tomato (strain ATCC BAA-871 / DC3000)</name>
    <dbReference type="NCBI Taxonomy" id="223283"/>
    <lineage>
        <taxon>Bacteria</taxon>
        <taxon>Pseudomonadati</taxon>
        <taxon>Pseudomonadota</taxon>
        <taxon>Gammaproteobacteria</taxon>
        <taxon>Pseudomonadales</taxon>
        <taxon>Pseudomonadaceae</taxon>
        <taxon>Pseudomonas</taxon>
    </lineage>
</organism>
<accession>Q885T2</accession>
<gene>
    <name evidence="1" type="primary">cmk</name>
    <name type="ordered locus">PSPTO_1749</name>
</gene>
<protein>
    <recommendedName>
        <fullName evidence="1">Cytidylate kinase</fullName>
        <shortName evidence="1">CK</shortName>
        <ecNumber evidence="1">2.7.4.25</ecNumber>
    </recommendedName>
    <alternativeName>
        <fullName evidence="1">Cytidine monophosphate kinase</fullName>
        <shortName evidence="1">CMP kinase</shortName>
    </alternativeName>
</protein>
<sequence>MKIKAPVITIDGPSGSGKGTVAGLLAKKLGWCLLDSGALYRLLAFAARNHGVDLTNEEALKLLAAHLDVQFETTAAGQGQRIILEGEDVTQAIRNEQIGSGASQVASLPAVRDALLMRQRAFQEEPGLVADGRDMGTVVFPDAPLKVFLTASAEERARRRYLQLKAKGDDVSLSSLLDEICARDERDTQRAVAPLKPAHDAIQLDSTELSIEQVLERILSEIALRDIAG</sequence>
<feature type="chain" id="PRO_0000131958" description="Cytidylate kinase">
    <location>
        <begin position="1"/>
        <end position="229"/>
    </location>
</feature>
<feature type="binding site" evidence="1">
    <location>
        <begin position="12"/>
        <end position="20"/>
    </location>
    <ligand>
        <name>ATP</name>
        <dbReference type="ChEBI" id="CHEBI:30616"/>
    </ligand>
</feature>
<comment type="catalytic activity">
    <reaction evidence="1">
        <text>CMP + ATP = CDP + ADP</text>
        <dbReference type="Rhea" id="RHEA:11600"/>
        <dbReference type="ChEBI" id="CHEBI:30616"/>
        <dbReference type="ChEBI" id="CHEBI:58069"/>
        <dbReference type="ChEBI" id="CHEBI:60377"/>
        <dbReference type="ChEBI" id="CHEBI:456216"/>
        <dbReference type="EC" id="2.7.4.25"/>
    </reaction>
</comment>
<comment type="catalytic activity">
    <reaction evidence="1">
        <text>dCMP + ATP = dCDP + ADP</text>
        <dbReference type="Rhea" id="RHEA:25094"/>
        <dbReference type="ChEBI" id="CHEBI:30616"/>
        <dbReference type="ChEBI" id="CHEBI:57566"/>
        <dbReference type="ChEBI" id="CHEBI:58593"/>
        <dbReference type="ChEBI" id="CHEBI:456216"/>
        <dbReference type="EC" id="2.7.4.25"/>
    </reaction>
</comment>
<comment type="subcellular location">
    <subcellularLocation>
        <location evidence="1">Cytoplasm</location>
    </subcellularLocation>
</comment>
<comment type="similarity">
    <text evidence="1">Belongs to the cytidylate kinase family. Type 1 subfamily.</text>
</comment>
<name>KCY_PSESM</name>
<reference key="1">
    <citation type="journal article" date="2003" name="Proc. Natl. Acad. Sci. U.S.A.">
        <title>The complete genome sequence of the Arabidopsis and tomato pathogen Pseudomonas syringae pv. tomato DC3000.</title>
        <authorList>
            <person name="Buell C.R."/>
            <person name="Joardar V."/>
            <person name="Lindeberg M."/>
            <person name="Selengut J."/>
            <person name="Paulsen I.T."/>
            <person name="Gwinn M.L."/>
            <person name="Dodson R.J."/>
            <person name="DeBoy R.T."/>
            <person name="Durkin A.S."/>
            <person name="Kolonay J.F."/>
            <person name="Madupu R."/>
            <person name="Daugherty S.C."/>
            <person name="Brinkac L.M."/>
            <person name="Beanan M.J."/>
            <person name="Haft D.H."/>
            <person name="Nelson W.C."/>
            <person name="Davidsen T.M."/>
            <person name="Zafar N."/>
            <person name="Zhou L."/>
            <person name="Liu J."/>
            <person name="Yuan Q."/>
            <person name="Khouri H.M."/>
            <person name="Fedorova N.B."/>
            <person name="Tran B."/>
            <person name="Russell D."/>
            <person name="Berry K.J."/>
            <person name="Utterback T.R."/>
            <person name="Van Aken S.E."/>
            <person name="Feldblyum T.V."/>
            <person name="D'Ascenzo M."/>
            <person name="Deng W.-L."/>
            <person name="Ramos A.R."/>
            <person name="Alfano J.R."/>
            <person name="Cartinhour S."/>
            <person name="Chatterjee A.K."/>
            <person name="Delaney T.P."/>
            <person name="Lazarowitz S.G."/>
            <person name="Martin G.B."/>
            <person name="Schneider D.J."/>
            <person name="Tang X."/>
            <person name="Bender C.L."/>
            <person name="White O."/>
            <person name="Fraser C.M."/>
            <person name="Collmer A."/>
        </authorList>
    </citation>
    <scope>NUCLEOTIDE SEQUENCE [LARGE SCALE GENOMIC DNA]</scope>
    <source>
        <strain>ATCC BAA-871 / DC3000</strain>
    </source>
</reference>
<evidence type="ECO:0000255" key="1">
    <source>
        <dbReference type="HAMAP-Rule" id="MF_00238"/>
    </source>
</evidence>
<proteinExistence type="inferred from homology"/>